<gene>
    <name type="primary">sdhE</name>
    <name type="ordered locus">XC_1986</name>
</gene>
<comment type="function">
    <text evidence="1">An FAD assembly protein, which accelerates covalent attachment of the cofactor into other proteins. Plays an essential role in the assembly of succinate dehydrogenase (SDH, respiratory complex II), an enzyme complex that is a component of both the tricarboxylic acid cycle and the electron transport chain, and which couples the oxidation of succinate to fumarate with the reduction of ubiquinone (coenzyme Q) to ubiquinol. Required for flavinylation (covalent attachment of FAD) of the flavoprotein subunit SdhA of SDH and other flavinylated proteins as well.</text>
</comment>
<comment type="subcellular location">
    <subcellularLocation>
        <location evidence="1">Cytoplasm</location>
    </subcellularLocation>
</comment>
<comment type="similarity">
    <text evidence="2">Belongs to the SdhE FAD assembly factor family.</text>
</comment>
<proteinExistence type="inferred from homology"/>
<accession>Q4UV74</accession>
<protein>
    <recommendedName>
        <fullName>FAD assembly factor SdhE</fullName>
    </recommendedName>
</protein>
<reference key="1">
    <citation type="journal article" date="2005" name="Genome Res.">
        <title>Comparative and functional genomic analyses of the pathogenicity of phytopathogen Xanthomonas campestris pv. campestris.</title>
        <authorList>
            <person name="Qian W."/>
            <person name="Jia Y."/>
            <person name="Ren S.-X."/>
            <person name="He Y.-Q."/>
            <person name="Feng J.-X."/>
            <person name="Lu L.-F."/>
            <person name="Sun Q."/>
            <person name="Ying G."/>
            <person name="Tang D.-J."/>
            <person name="Tang H."/>
            <person name="Wu W."/>
            <person name="Hao P."/>
            <person name="Wang L."/>
            <person name="Jiang B.-L."/>
            <person name="Zeng S."/>
            <person name="Gu W.-Y."/>
            <person name="Lu G."/>
            <person name="Rong L."/>
            <person name="Tian Y."/>
            <person name="Yao Z."/>
            <person name="Fu G."/>
            <person name="Chen B."/>
            <person name="Fang R."/>
            <person name="Qiang B."/>
            <person name="Chen Z."/>
            <person name="Zhao G.-P."/>
            <person name="Tang J.-L."/>
            <person name="He C."/>
        </authorList>
    </citation>
    <scope>NUCLEOTIDE SEQUENCE [LARGE SCALE GENOMIC DNA]</scope>
    <source>
        <strain>8004</strain>
    </source>
</reference>
<name>SDHE_XANC8</name>
<dbReference type="EMBL" id="CP000050">
    <property type="protein sequence ID" value="AAY49049.1"/>
    <property type="molecule type" value="Genomic_DNA"/>
</dbReference>
<dbReference type="SMR" id="Q4UV74"/>
<dbReference type="KEGG" id="xcb:XC_1986"/>
<dbReference type="HOGENOM" id="CLU_103054_2_1_6"/>
<dbReference type="Proteomes" id="UP000000420">
    <property type="component" value="Chromosome"/>
</dbReference>
<dbReference type="GO" id="GO:0005737">
    <property type="term" value="C:cytoplasm"/>
    <property type="evidence" value="ECO:0007669"/>
    <property type="project" value="UniProtKB-SubCell"/>
</dbReference>
<dbReference type="GO" id="GO:0006105">
    <property type="term" value="P:succinate metabolic process"/>
    <property type="evidence" value="ECO:0007669"/>
    <property type="project" value="TreeGrafter"/>
</dbReference>
<dbReference type="FunFam" id="1.10.150.250:FF:000006">
    <property type="entry name" value="Succinate dehydrogenase assembly factor 2 family protein"/>
    <property type="match status" value="1"/>
</dbReference>
<dbReference type="Gene3D" id="1.10.150.250">
    <property type="entry name" value="Flavinator of succinate dehydrogenase"/>
    <property type="match status" value="1"/>
</dbReference>
<dbReference type="InterPro" id="IPR005631">
    <property type="entry name" value="SDH"/>
</dbReference>
<dbReference type="InterPro" id="IPR036714">
    <property type="entry name" value="SDH_sf"/>
</dbReference>
<dbReference type="InterPro" id="IPR050531">
    <property type="entry name" value="SdhE_FAD_assembly_factor"/>
</dbReference>
<dbReference type="PANTHER" id="PTHR39585">
    <property type="entry name" value="FAD ASSEMBLY FACTOR SDHE"/>
    <property type="match status" value="1"/>
</dbReference>
<dbReference type="PANTHER" id="PTHR39585:SF1">
    <property type="entry name" value="FAD ASSEMBLY FACTOR SDHE"/>
    <property type="match status" value="1"/>
</dbReference>
<dbReference type="Pfam" id="PF03937">
    <property type="entry name" value="Sdh5"/>
    <property type="match status" value="1"/>
</dbReference>
<dbReference type="SUPFAM" id="SSF109910">
    <property type="entry name" value="YgfY-like"/>
    <property type="match status" value="1"/>
</dbReference>
<sequence length="86" mass="10267">MEKEMDEDTLLKKLRWRCRRGMRELDQLFGRYLDRRWAQAPAAERAVFLQLLDCEDDKLWRWFMGYEACPDADNAALIADIRAMPA</sequence>
<organism>
    <name type="scientific">Xanthomonas campestris pv. campestris (strain 8004)</name>
    <dbReference type="NCBI Taxonomy" id="314565"/>
    <lineage>
        <taxon>Bacteria</taxon>
        <taxon>Pseudomonadati</taxon>
        <taxon>Pseudomonadota</taxon>
        <taxon>Gammaproteobacteria</taxon>
        <taxon>Lysobacterales</taxon>
        <taxon>Lysobacteraceae</taxon>
        <taxon>Xanthomonas</taxon>
    </lineage>
</organism>
<keyword id="KW-0143">Chaperone</keyword>
<keyword id="KW-0963">Cytoplasm</keyword>
<evidence type="ECO:0000250" key="1">
    <source>
        <dbReference type="UniProtKB" id="G4V4G2"/>
    </source>
</evidence>
<evidence type="ECO:0000305" key="2"/>
<feature type="chain" id="PRO_0000214432" description="FAD assembly factor SdhE">
    <location>
        <begin position="1"/>
        <end position="86"/>
    </location>
</feature>